<gene>
    <name type="ORF">IIV3-069L</name>
</gene>
<organismHost>
    <name type="scientific">Aedes vexans</name>
    <name type="common">Inland floodwater mosquito</name>
    <name type="synonym">Culex vexans</name>
    <dbReference type="NCBI Taxonomy" id="7163"/>
</organismHost>
<organismHost>
    <name type="scientific">Culex territans</name>
    <dbReference type="NCBI Taxonomy" id="42431"/>
</organismHost>
<organismHost>
    <name type="scientific">Culiseta annulata</name>
    <dbReference type="NCBI Taxonomy" id="332058"/>
</organismHost>
<organismHost>
    <name type="scientific">Ochlerotatus sollicitans</name>
    <name type="common">eastern saltmarsh mosquito</name>
    <dbReference type="NCBI Taxonomy" id="310513"/>
</organismHost>
<organismHost>
    <name type="scientific">Ochlerotatus taeniorhynchus</name>
    <name type="common">Black salt marsh mosquito</name>
    <name type="synonym">Aedes taeniorhynchus</name>
    <dbReference type="NCBI Taxonomy" id="329105"/>
</organismHost>
<organismHost>
    <name type="scientific">Psorophora ferox</name>
    <dbReference type="NCBI Taxonomy" id="7183"/>
</organismHost>
<name>VF198_IIV3</name>
<feature type="chain" id="PRO_0000377932" description="Uncharacterized protein 069L">
    <location>
        <begin position="1"/>
        <end position="423"/>
    </location>
</feature>
<protein>
    <recommendedName>
        <fullName>Uncharacterized protein 069L</fullName>
    </recommendedName>
</protein>
<organism>
    <name type="scientific">Invertebrate iridescent virus 3</name>
    <name type="common">IIV-3</name>
    <name type="synonym">Mosquito iridescent virus</name>
    <dbReference type="NCBI Taxonomy" id="345201"/>
    <lineage>
        <taxon>Viruses</taxon>
        <taxon>Varidnaviria</taxon>
        <taxon>Bamfordvirae</taxon>
        <taxon>Nucleocytoviricota</taxon>
        <taxon>Megaviricetes</taxon>
        <taxon>Pimascovirales</taxon>
        <taxon>Iridoviridae</taxon>
        <taxon>Betairidovirinae</taxon>
        <taxon>Chloriridovirus</taxon>
    </lineage>
</organism>
<keyword id="KW-1185">Reference proteome</keyword>
<evidence type="ECO:0000305" key="1"/>
<comment type="similarity">
    <text evidence="1">Belongs to the IIV-6 198R family.</text>
</comment>
<accession>Q196Z1</accession>
<dbReference type="EMBL" id="DQ643392">
    <property type="protein sequence ID" value="ABF82099.1"/>
    <property type="molecule type" value="Genomic_DNA"/>
</dbReference>
<dbReference type="RefSeq" id="YP_654641.1">
    <property type="nucleotide sequence ID" value="NC_008187.1"/>
</dbReference>
<dbReference type="KEGG" id="vg:4156280"/>
<dbReference type="OrthoDB" id="7734at10239"/>
<dbReference type="Proteomes" id="UP000001358">
    <property type="component" value="Genome"/>
</dbReference>
<reference key="1">
    <citation type="journal article" date="2006" name="J. Virol.">
        <title>Genome of invertebrate iridescent virus type 3 (mosquito iridescent virus).</title>
        <authorList>
            <person name="Delhon G."/>
            <person name="Tulman E.R."/>
            <person name="Afonso C.L."/>
            <person name="Lu Z."/>
            <person name="Becnel J.J."/>
            <person name="Moser B.A."/>
            <person name="Kutish G.F."/>
            <person name="Rock D.L."/>
        </authorList>
    </citation>
    <scope>NUCLEOTIDE SEQUENCE [LARGE SCALE GENOMIC DNA]</scope>
</reference>
<sequence length="423" mass="47354">MKVDFEFVSTHRNRTLWPNPCCFEVGWSSTAPSNAINAYDPVSDQVPLLVWVGSDQKVTGKLIAHVGDWMVVAFPIGAVSPKVNNYRGMQLSMGSVVTRIVANRRVSSDAQWDYFKVQIDPSLEQQVPDSVVSLEPISVPGTWFVPGGSDVVNAYSGMYLYNETLGQWVVIRAYDHTFHLAIPDSIMTGWDVTHQYSIRPQLPSLSNFLLDAGSTTTLIATRLASHARLGDWIRIVTTGECAKVVNVLDGSIGVSPPLSRAFFAGTPVELLGQIYDNYQTLSYPGLVIGNQEQSAYQVTLVSAFIPNVETENGGYPNEYPFLYVEFSDTHYPYQNNLFSNNHSNKSWFKVTTPTGLYQSKERWIKFTGDYSFKTIRFKPTSNFRIVWRTPSGAEVKFTQPDTQSPSSPDPSLQTFIQFNMFKV</sequence>
<proteinExistence type="inferred from homology"/>